<reference key="1">
    <citation type="journal article" date="1996" name="Science">
        <title>Complete genome sequence of the methanogenic archaeon, Methanococcus jannaschii.</title>
        <authorList>
            <person name="Bult C.J."/>
            <person name="White O."/>
            <person name="Olsen G.J."/>
            <person name="Zhou L."/>
            <person name="Fleischmann R.D."/>
            <person name="Sutton G.G."/>
            <person name="Blake J.A."/>
            <person name="FitzGerald L.M."/>
            <person name="Clayton R.A."/>
            <person name="Gocayne J.D."/>
            <person name="Kerlavage A.R."/>
            <person name="Dougherty B.A."/>
            <person name="Tomb J.-F."/>
            <person name="Adams M.D."/>
            <person name="Reich C.I."/>
            <person name="Overbeek R."/>
            <person name="Kirkness E.F."/>
            <person name="Weinstock K.G."/>
            <person name="Merrick J.M."/>
            <person name="Glodek A."/>
            <person name="Scott J.L."/>
            <person name="Geoghagen N.S.M."/>
            <person name="Weidman J.F."/>
            <person name="Fuhrmann J.L."/>
            <person name="Nguyen D."/>
            <person name="Utterback T.R."/>
            <person name="Kelley J.M."/>
            <person name="Peterson J.D."/>
            <person name="Sadow P.W."/>
            <person name="Hanna M.C."/>
            <person name="Cotton M.D."/>
            <person name="Roberts K.M."/>
            <person name="Hurst M.A."/>
            <person name="Kaine B.P."/>
            <person name="Borodovsky M."/>
            <person name="Klenk H.-P."/>
            <person name="Fraser C.M."/>
            <person name="Smith H.O."/>
            <person name="Woese C.R."/>
            <person name="Venter J.C."/>
        </authorList>
    </citation>
    <scope>NUCLEOTIDE SEQUENCE [LARGE SCALE GENOMIC DNA]</scope>
    <source>
        <strain>ATCC 43067 / DSM 2661 / JAL-1 / JCM 10045 / NBRC 100440</strain>
    </source>
</reference>
<reference key="2">
    <citation type="journal article" date="2001" name="J. Bacteriol.">
        <title>ADP-dependent phosphofructokinases in mesophilic and thermophilic methanogenic archaea.</title>
        <authorList>
            <person name="Verhees C.H."/>
            <person name="Tuininga J.E."/>
            <person name="Kengen S.W.M."/>
            <person name="Stams A.J.M."/>
            <person name="van der Oost J."/>
            <person name="de Vos W.M."/>
        </authorList>
    </citation>
    <scope>CHARACTERIZATION</scope>
</reference>
<reference key="3">
    <citation type="journal article" date="2002" name="J. Biol. Chem.">
        <title>ADP-dependent glucokinase/phosphofructokinase, a novel bifunctional enzyme from the hyperthermophilic archaeon Methanococcus jannaschii.</title>
        <authorList>
            <person name="Sakuraba H."/>
            <person name="Yoshioka I."/>
            <person name="Koga S."/>
            <person name="Takahashi M."/>
            <person name="Kitahama Y."/>
            <person name="Satomura T."/>
            <person name="Kawakami R."/>
            <person name="Ohshima T."/>
        </authorList>
    </citation>
    <scope>CHARACTERIZATION</scope>
    <scope>ENZYME KINETICS</scope>
</reference>
<protein>
    <recommendedName>
        <fullName>Bifunctional ADP-specific glucokinase/phosphofructokinase</fullName>
        <ecNumber>2.7.1.146</ecNumber>
        <ecNumber>2.7.1.147</ecNumber>
    </recommendedName>
    <alternativeName>
        <fullName>ADP-GK</fullName>
    </alternativeName>
    <alternativeName>
        <fullName>ADP-GK/PFK</fullName>
    </alternativeName>
    <alternativeName>
        <fullName>ADP-Pfk</fullName>
    </alternativeName>
    <alternativeName>
        <fullName>ADP-dependent glucokinase</fullName>
    </alternativeName>
    <alternativeName>
        <fullName>ADP-dependent phosphofructokinase</fullName>
    </alternativeName>
</protein>
<evidence type="ECO:0000250" key="1"/>
<evidence type="ECO:0000305" key="2"/>
<evidence type="ECO:0007829" key="3">
    <source>
        <dbReference type="PDB" id="5OD2"/>
    </source>
</evidence>
<comment type="function">
    <text>Catalyzes the phosphorylation of fructose 6-phosphate and D-glucose to fructose 1,6-bisphosphate and D-glucose 6-phosphate, respectively, using ADP as the phosphate donor.</text>
</comment>
<comment type="catalytic activity">
    <reaction>
        <text>D-glucose + ADP = D-glucose 6-phosphate + AMP + H(+)</text>
        <dbReference type="Rhea" id="RHEA:11460"/>
        <dbReference type="ChEBI" id="CHEBI:4167"/>
        <dbReference type="ChEBI" id="CHEBI:15378"/>
        <dbReference type="ChEBI" id="CHEBI:61548"/>
        <dbReference type="ChEBI" id="CHEBI:456215"/>
        <dbReference type="ChEBI" id="CHEBI:456216"/>
        <dbReference type="EC" id="2.7.1.147"/>
    </reaction>
</comment>
<comment type="catalytic activity">
    <reaction>
        <text>beta-D-fructose 6-phosphate + ADP = beta-D-fructose 1,6-bisphosphate + AMP + H(+)</text>
        <dbReference type="Rhea" id="RHEA:20105"/>
        <dbReference type="ChEBI" id="CHEBI:15378"/>
        <dbReference type="ChEBI" id="CHEBI:32966"/>
        <dbReference type="ChEBI" id="CHEBI:57634"/>
        <dbReference type="ChEBI" id="CHEBI:456215"/>
        <dbReference type="ChEBI" id="CHEBI:456216"/>
        <dbReference type="EC" id="2.7.1.146"/>
    </reaction>
</comment>
<comment type="cofactor">
    <cofactor evidence="1">
        <name>Mg(2+)</name>
        <dbReference type="ChEBI" id="CHEBI:18420"/>
    </cofactor>
    <text evidence="1">Binds 1 Mg(2+) ion per subunit.</text>
</comment>
<comment type="biophysicochemical properties">
    <kinetics>
        <KM>1.6 mM for D-glucose</KM>
        <KM>0.032 mM for ADP with D-glucose as phosphoryl group acceptor</KM>
        <KM>9.6 uM for fructose 6-phosphate</KM>
        <KM>0.49 mM for ADP with D-fructose 6-phosphate as phosphoryl group acceptor</KM>
        <Vmax>11.2 umol/min/mg enzyme toward fructose 6-phosphate</Vmax>
        <Vmax>9.59 umol/min/mg enzyme toward ADP</Vmax>
    </kinetics>
    <phDependence>
        <text>Optimum pH is 6.5.</text>
    </phDependence>
</comment>
<comment type="pathway">
    <text>Carbohydrate degradation; glycolysis.</text>
</comment>
<comment type="subunit">
    <text>Monomer.</text>
</comment>
<comment type="subcellular location">
    <subcellularLocation>
        <location>Cytoplasm</location>
    </subcellularLocation>
</comment>
<comment type="similarity">
    <text evidence="2">Belongs to the carbohydrate kinase PfkC family.</text>
</comment>
<name>K6PF_METJA</name>
<feature type="chain" id="PRO_0000184764" description="Bifunctional ADP-specific glucokinase/phosphofructokinase">
    <location>
        <begin position="1"/>
        <end position="462"/>
    </location>
</feature>
<feature type="domain" description="ADPK">
    <location>
        <begin position="1"/>
        <end position="458"/>
    </location>
</feature>
<feature type="active site" description="Proton acceptor" evidence="1">
    <location>
        <position position="442"/>
    </location>
</feature>
<feature type="binding site" evidence="1">
    <location>
        <position position="272"/>
    </location>
    <ligand>
        <name>Mg(2+)</name>
        <dbReference type="ChEBI" id="CHEBI:18420"/>
    </ligand>
</feature>
<feature type="binding site" evidence="1">
    <location>
        <position position="302"/>
    </location>
    <ligand>
        <name>Mg(2+)</name>
        <dbReference type="ChEBI" id="CHEBI:18420"/>
    </ligand>
</feature>
<feature type="binding site" evidence="1">
    <location>
        <position position="442"/>
    </location>
    <ligand>
        <name>Mg(2+)</name>
        <dbReference type="ChEBI" id="CHEBI:18420"/>
    </ligand>
</feature>
<feature type="helix" evidence="3">
    <location>
        <begin position="7"/>
        <end position="14"/>
    </location>
</feature>
<feature type="strand" evidence="3">
    <location>
        <begin position="18"/>
        <end position="23"/>
    </location>
</feature>
<feature type="strand" evidence="3">
    <location>
        <begin position="26"/>
        <end position="32"/>
    </location>
</feature>
<feature type="helix" evidence="3">
    <location>
        <begin position="35"/>
        <end position="43"/>
    </location>
</feature>
<feature type="helix" evidence="3">
    <location>
        <begin position="47"/>
        <end position="56"/>
    </location>
</feature>
<feature type="strand" evidence="3">
    <location>
        <begin position="59"/>
        <end position="63"/>
    </location>
</feature>
<feature type="helix" evidence="3">
    <location>
        <begin position="64"/>
        <end position="77"/>
    </location>
</feature>
<feature type="strand" evidence="3">
    <location>
        <begin position="81"/>
        <end position="85"/>
    </location>
</feature>
<feature type="helix" evidence="3">
    <location>
        <begin position="89"/>
        <end position="96"/>
    </location>
</feature>
<feature type="strand" evidence="3">
    <location>
        <begin position="101"/>
        <end position="107"/>
    </location>
</feature>
<feature type="helix" evidence="3">
    <location>
        <begin position="108"/>
        <end position="118"/>
    </location>
</feature>
<feature type="strand" evidence="3">
    <location>
        <begin position="122"/>
        <end position="127"/>
    </location>
</feature>
<feature type="helix" evidence="3">
    <location>
        <begin position="133"/>
        <end position="136"/>
    </location>
</feature>
<feature type="strand" evidence="3">
    <location>
        <begin position="145"/>
        <end position="151"/>
    </location>
</feature>
<feature type="strand" evidence="3">
    <location>
        <begin position="154"/>
        <end position="159"/>
    </location>
</feature>
<feature type="helix" evidence="3">
    <location>
        <begin position="160"/>
        <end position="162"/>
    </location>
</feature>
<feature type="strand" evidence="3">
    <location>
        <begin position="171"/>
        <end position="177"/>
    </location>
</feature>
<feature type="strand" evidence="3">
    <location>
        <begin position="182"/>
        <end position="185"/>
    </location>
</feature>
<feature type="strand" evidence="3">
    <location>
        <begin position="188"/>
        <end position="191"/>
    </location>
</feature>
<feature type="strand" evidence="3">
    <location>
        <begin position="196"/>
        <end position="201"/>
    </location>
</feature>
<feature type="helix" evidence="3">
    <location>
        <begin position="213"/>
        <end position="216"/>
    </location>
</feature>
<feature type="helix" evidence="3">
    <location>
        <begin position="219"/>
        <end position="224"/>
    </location>
</feature>
<feature type="strand" evidence="3">
    <location>
        <begin position="227"/>
        <end position="231"/>
    </location>
</feature>
<feature type="helix" evidence="3">
    <location>
        <begin position="234"/>
        <end position="236"/>
    </location>
</feature>
<feature type="helix" evidence="3">
    <location>
        <begin position="247"/>
        <end position="261"/>
    </location>
</feature>
<feature type="strand" evidence="3">
    <location>
        <begin position="263"/>
        <end position="265"/>
    </location>
</feature>
<feature type="strand" evidence="3">
    <location>
        <begin position="268"/>
        <end position="272"/>
    </location>
</feature>
<feature type="helix" evidence="3">
    <location>
        <begin position="279"/>
        <end position="288"/>
    </location>
</feature>
<feature type="helix" evidence="3">
    <location>
        <begin position="290"/>
        <end position="292"/>
    </location>
</feature>
<feature type="strand" evidence="3">
    <location>
        <begin position="294"/>
        <end position="298"/>
    </location>
</feature>
<feature type="helix" evidence="3">
    <location>
        <begin position="300"/>
        <end position="309"/>
    </location>
</feature>
<feature type="helix" evidence="3">
    <location>
        <begin position="313"/>
        <end position="322"/>
    </location>
</feature>
<feature type="helix" evidence="3">
    <location>
        <begin position="325"/>
        <end position="338"/>
    </location>
</feature>
<feature type="strand" evidence="3">
    <location>
        <begin position="344"/>
        <end position="349"/>
    </location>
</feature>
<feature type="strand" evidence="3">
    <location>
        <begin position="352"/>
        <end position="358"/>
    </location>
</feature>
<feature type="strand" evidence="3">
    <location>
        <begin position="361"/>
        <end position="363"/>
    </location>
</feature>
<feature type="helix" evidence="3">
    <location>
        <begin position="365"/>
        <end position="385"/>
    </location>
</feature>
<feature type="helix" evidence="3">
    <location>
        <begin position="391"/>
        <end position="393"/>
    </location>
</feature>
<feature type="helix" evidence="3">
    <location>
        <begin position="394"/>
        <end position="399"/>
    </location>
</feature>
<feature type="helix" evidence="3">
    <location>
        <begin position="406"/>
        <end position="414"/>
    </location>
</feature>
<feature type="strand" evidence="3">
    <location>
        <begin position="419"/>
        <end position="427"/>
    </location>
</feature>
<feature type="helix" evidence="3">
    <location>
        <begin position="440"/>
        <end position="460"/>
    </location>
</feature>
<accession>Q58999</accession>
<proteinExistence type="evidence at protein level"/>
<organism>
    <name type="scientific">Methanocaldococcus jannaschii (strain ATCC 43067 / DSM 2661 / JAL-1 / JCM 10045 / NBRC 100440)</name>
    <name type="common">Methanococcus jannaschii</name>
    <dbReference type="NCBI Taxonomy" id="243232"/>
    <lineage>
        <taxon>Archaea</taxon>
        <taxon>Methanobacteriati</taxon>
        <taxon>Methanobacteriota</taxon>
        <taxon>Methanomada group</taxon>
        <taxon>Methanococci</taxon>
        <taxon>Methanococcales</taxon>
        <taxon>Methanocaldococcaceae</taxon>
        <taxon>Methanocaldococcus</taxon>
    </lineage>
</organism>
<keyword id="KW-0002">3D-structure</keyword>
<keyword id="KW-0963">Cytoplasm</keyword>
<keyword id="KW-0324">Glycolysis</keyword>
<keyword id="KW-0418">Kinase</keyword>
<keyword id="KW-0460">Magnesium</keyword>
<keyword id="KW-0479">Metal-binding</keyword>
<keyword id="KW-0511">Multifunctional enzyme</keyword>
<keyword id="KW-1185">Reference proteome</keyword>
<keyword id="KW-0808">Transferase</keyword>
<gene>
    <name type="primary">pfkC</name>
    <name type="synonym">glkA</name>
    <name type="ordered locus">MJ1604</name>
</gene>
<dbReference type="EC" id="2.7.1.146"/>
<dbReference type="EC" id="2.7.1.147"/>
<dbReference type="EMBL" id="L77117">
    <property type="protein sequence ID" value="AAB99627.1"/>
    <property type="molecule type" value="Genomic_DNA"/>
</dbReference>
<dbReference type="PIR" id="C64500">
    <property type="entry name" value="C64500"/>
</dbReference>
<dbReference type="PDB" id="5OD2">
    <property type="method" value="X-ray"/>
    <property type="resolution" value="1.98 A"/>
    <property type="chains" value="A/B/C=4-461"/>
</dbReference>
<dbReference type="PDBsum" id="5OD2"/>
<dbReference type="SMR" id="Q58999"/>
<dbReference type="FunCoup" id="Q58999">
    <property type="interactions" value="159"/>
</dbReference>
<dbReference type="STRING" id="243232.MJ_1604"/>
<dbReference type="PaxDb" id="243232-MJ_1604"/>
<dbReference type="EnsemblBacteria" id="AAB99627">
    <property type="protein sequence ID" value="AAB99627"/>
    <property type="gene ID" value="MJ_1604"/>
</dbReference>
<dbReference type="KEGG" id="mja:MJ_1604"/>
<dbReference type="eggNOG" id="arCOG03370">
    <property type="taxonomic scope" value="Archaea"/>
</dbReference>
<dbReference type="HOGENOM" id="CLU_046643_0_0_2"/>
<dbReference type="InParanoid" id="Q58999"/>
<dbReference type="PhylomeDB" id="Q58999"/>
<dbReference type="BRENDA" id="2.7.1.146">
    <property type="organism ID" value="3260"/>
</dbReference>
<dbReference type="BRENDA" id="2.7.1.147">
    <property type="organism ID" value="3260"/>
</dbReference>
<dbReference type="UniPathway" id="UPA00109"/>
<dbReference type="Proteomes" id="UP000000805">
    <property type="component" value="Chromosome"/>
</dbReference>
<dbReference type="GO" id="GO:0005737">
    <property type="term" value="C:cytoplasm"/>
    <property type="evidence" value="ECO:0007669"/>
    <property type="project" value="UniProtKB-SubCell"/>
</dbReference>
<dbReference type="GO" id="GO:0043843">
    <property type="term" value="F:ADP-specific glucokinase activity"/>
    <property type="evidence" value="ECO:0007669"/>
    <property type="project" value="UniProtKB-EC"/>
</dbReference>
<dbReference type="GO" id="GO:0043844">
    <property type="term" value="F:ADP-specific phosphofructokinase activity"/>
    <property type="evidence" value="ECO:0007669"/>
    <property type="project" value="UniProtKB-EC"/>
</dbReference>
<dbReference type="GO" id="GO:0000287">
    <property type="term" value="F:magnesium ion binding"/>
    <property type="evidence" value="ECO:0007669"/>
    <property type="project" value="InterPro"/>
</dbReference>
<dbReference type="GO" id="GO:0008443">
    <property type="term" value="F:phosphofructokinase activity"/>
    <property type="evidence" value="ECO:0007669"/>
    <property type="project" value="InterPro"/>
</dbReference>
<dbReference type="GO" id="GO:0005975">
    <property type="term" value="P:carbohydrate metabolic process"/>
    <property type="evidence" value="ECO:0000318"/>
    <property type="project" value="GO_Central"/>
</dbReference>
<dbReference type="GO" id="GO:0006000">
    <property type="term" value="P:fructose metabolic process"/>
    <property type="evidence" value="ECO:0007669"/>
    <property type="project" value="InterPro"/>
</dbReference>
<dbReference type="GO" id="GO:0006096">
    <property type="term" value="P:glycolytic process"/>
    <property type="evidence" value="ECO:0007669"/>
    <property type="project" value="UniProtKB-UniRule"/>
</dbReference>
<dbReference type="Gene3D" id="3.30.1110.20">
    <property type="match status" value="1"/>
</dbReference>
<dbReference type="Gene3D" id="3.40.1190.20">
    <property type="match status" value="1"/>
</dbReference>
<dbReference type="HAMAP" id="MF_00561">
    <property type="entry name" value="ADP_PFKinase"/>
    <property type="match status" value="1"/>
</dbReference>
<dbReference type="InterPro" id="IPR007666">
    <property type="entry name" value="ADP_PFK/GK"/>
</dbReference>
<dbReference type="InterPro" id="IPR015990">
    <property type="entry name" value="ADP_PFK/GK_arc"/>
</dbReference>
<dbReference type="InterPro" id="IPR011790">
    <property type="entry name" value="ADP_PFK_arc"/>
</dbReference>
<dbReference type="InterPro" id="IPR029056">
    <property type="entry name" value="Ribokinase-like"/>
</dbReference>
<dbReference type="NCBIfam" id="TIGR02045">
    <property type="entry name" value="P_fruct_ADP"/>
    <property type="match status" value="1"/>
</dbReference>
<dbReference type="PANTHER" id="PTHR21208">
    <property type="entry name" value="ADP-DEPENDENT GLUCOKINASE"/>
    <property type="match status" value="1"/>
</dbReference>
<dbReference type="PANTHER" id="PTHR21208:SF1">
    <property type="entry name" value="ADP-DEPENDENT GLUCOKINASE"/>
    <property type="match status" value="1"/>
</dbReference>
<dbReference type="Pfam" id="PF04587">
    <property type="entry name" value="ADP_PFK_GK"/>
    <property type="match status" value="1"/>
</dbReference>
<dbReference type="PIRSF" id="PIRSF015883">
    <property type="entry name" value="ADP-Pfk_glckin"/>
    <property type="match status" value="1"/>
</dbReference>
<dbReference type="SUPFAM" id="SSF53613">
    <property type="entry name" value="Ribokinase-like"/>
    <property type="match status" value="1"/>
</dbReference>
<dbReference type="PROSITE" id="PS51255">
    <property type="entry name" value="ADPK"/>
    <property type="match status" value="1"/>
</dbReference>
<sequence>MCDIMEIKKFIETIKGTKLFTAYNTNVDAIKYLKDEDVQKLVDEFNHKDIIERMEEYPRIIEEPLDFVARLVHSIKTGKPAEVPIKDDKKLHEWFDRIKYDEERMGGQAGIVSNLMATLQIDKIIVYTPFLSKKQAEMFVDYDNLLYPLVENGNLVLKKVREAYRDDPIKINRIFEFKKGLKFKLNGEEITAKQSTRFIVASRPEALRIEIKDDVRKFLPKIGEAVDCAFLSGYQAIKEEYRDGKTAKYYFERAEEDIKLLKKNKNIKTHLEFASISNIEIRKMVVDYILSNVESVGMDETEIANVLHILGYDELSNNILKDSFIEDVIEGAKILLDKFKNLEVVQVHTIYYILFVCRADNPLSKEELEECLEFSTILASTKAKLGNIRAIDDLHEGLKIPHNKYGDLLKEIAEKFNDNNYKIALSPSRYVEKPKSTVGLGDTISSGAFVYYVSLLNKKRMS</sequence>